<keyword id="KW-0007">Acetylation</keyword>
<keyword id="KW-0013">ADP-ribosylation</keyword>
<keyword id="KW-0044">Antibiotic</keyword>
<keyword id="KW-0929">Antimicrobial</keyword>
<keyword id="KW-0158">Chromosome</keyword>
<keyword id="KW-0903">Direct protein sequencing</keyword>
<keyword id="KW-0238">DNA-binding</keyword>
<keyword id="KW-0325">Glycoprotein</keyword>
<keyword id="KW-0379">Hydroxylation</keyword>
<keyword id="KW-1017">Isopeptide bond</keyword>
<keyword id="KW-0488">Methylation</keyword>
<keyword id="KW-0544">Nucleosome core</keyword>
<keyword id="KW-0539">Nucleus</keyword>
<keyword id="KW-0597">Phosphoprotein</keyword>
<keyword id="KW-1185">Reference proteome</keyword>
<keyword id="KW-0832">Ubl conjugation</keyword>
<organism>
    <name type="scientific">Rattus norvegicus</name>
    <name type="common">Rat</name>
    <dbReference type="NCBI Taxonomy" id="10116"/>
    <lineage>
        <taxon>Eukaryota</taxon>
        <taxon>Metazoa</taxon>
        <taxon>Chordata</taxon>
        <taxon>Craniata</taxon>
        <taxon>Vertebrata</taxon>
        <taxon>Euteleostomi</taxon>
        <taxon>Mammalia</taxon>
        <taxon>Eutheria</taxon>
        <taxon>Euarchontoglires</taxon>
        <taxon>Glires</taxon>
        <taxon>Rodentia</taxon>
        <taxon>Myomorpha</taxon>
        <taxon>Muroidea</taxon>
        <taxon>Muridae</taxon>
        <taxon>Murinae</taxon>
        <taxon>Rattus</taxon>
    </lineage>
</organism>
<sequence>MPEPAKSRPAPKKGSKKAVTKAQKKDGKERKRSRKESYSVYVYKVLKQVHPDTGISSKAMGIMNSFVNDIFERIAGERRLAHYNKRSTITSREIQTAVRLLLPGELAKHAVSEGTKAVTKYTSSK</sequence>
<name>H2B1_RAT</name>
<feature type="initiator methionine" description="Removed" evidence="2">
    <location>
        <position position="1"/>
    </location>
</feature>
<feature type="chain" id="PRO_0000071841" description="Histone H2B type 1">
    <location>
        <begin position="2"/>
        <end position="125"/>
    </location>
</feature>
<feature type="region of interest" description="Disordered" evidence="12">
    <location>
        <begin position="1"/>
        <end position="36"/>
    </location>
</feature>
<feature type="compositionally biased region" description="Basic residues" evidence="12">
    <location>
        <begin position="9"/>
        <end position="19"/>
    </location>
</feature>
<feature type="modified residue" description="N-acetylproline" evidence="2">
    <location>
        <position position="2"/>
    </location>
</feature>
<feature type="modified residue" description="ADP-ribosyl glutamic acid" evidence="3">
    <location>
        <position position="3"/>
    </location>
</feature>
<feature type="modified residue" description="N6-(2-hydroxyisobutyryl)lysine; alternate" evidence="3">
    <location>
        <position position="6"/>
    </location>
</feature>
<feature type="modified residue" description="N6-(beta-hydroxybutyryl)lysine; alternate" evidence="9">
    <location>
        <position position="6"/>
    </location>
</feature>
<feature type="modified residue" description="N6-acetyllysine; alternate" evidence="13">
    <location>
        <position position="6"/>
    </location>
</feature>
<feature type="modified residue" description="N6-butyryllysine; alternate" evidence="3">
    <location>
        <position position="6"/>
    </location>
</feature>
<feature type="modified residue" description="N6-crotonyllysine; alternate" evidence="3">
    <location>
        <position position="6"/>
    </location>
</feature>
<feature type="modified residue" description="N6-lactoyllysine; alternate" evidence="3">
    <location>
        <position position="6"/>
    </location>
</feature>
<feature type="modified residue" description="ADP-ribosylserine" evidence="3">
    <location>
        <position position="7"/>
    </location>
</feature>
<feature type="modified residue" description="N6-(beta-hydroxybutyryl)lysine; alternate" evidence="9">
    <location>
        <position position="12"/>
    </location>
</feature>
<feature type="modified residue" description="N6-acetyllysine; alternate" evidence="5">
    <location>
        <position position="12"/>
    </location>
</feature>
<feature type="modified residue" description="N6-crotonyllysine; alternate" evidence="3">
    <location>
        <position position="12"/>
    </location>
</feature>
<feature type="modified residue" description="N6-lactoyllysine; alternate" evidence="3">
    <location>
        <position position="12"/>
    </location>
</feature>
<feature type="modified residue" description="N6-(2-hydroxyisobutyryl)lysine; alternate" evidence="3">
    <location>
        <position position="13"/>
    </location>
</feature>
<feature type="modified residue" description="N6-acetyllysine; alternate" evidence="13">
    <location>
        <position position="13"/>
    </location>
</feature>
<feature type="modified residue" description="N6-crotonyllysine; alternate" evidence="3">
    <location>
        <position position="13"/>
    </location>
</feature>
<feature type="modified residue" description="Phosphoserine; by STK4/MST1" evidence="3">
    <location>
        <position position="15"/>
    </location>
</feature>
<feature type="modified residue" description="N6-acetyllysine; alternate" evidence="13">
    <location>
        <position position="16"/>
    </location>
</feature>
<feature type="modified residue" description="N6-crotonyllysine; alternate" evidence="3">
    <location>
        <position position="16"/>
    </location>
</feature>
<feature type="modified residue" description="N6-lactoyllysine; alternate" evidence="3">
    <location>
        <position position="16"/>
    </location>
</feature>
<feature type="modified residue" description="N6-acetyllysine; alternate" evidence="3">
    <location>
        <position position="17"/>
    </location>
</feature>
<feature type="modified residue" description="N6-crotonyllysine; alternate" evidence="3">
    <location>
        <position position="17"/>
    </location>
</feature>
<feature type="modified residue" description="N6-glutaryllysine; alternate" evidence="3">
    <location>
        <position position="17"/>
    </location>
</feature>
<feature type="modified residue" description="N6-lactoyllysine; alternate" evidence="3">
    <location>
        <position position="17"/>
    </location>
</feature>
<feature type="modified residue" description="N6-(2-hydroxyisobutyryl)lysine; alternate" evidence="3">
    <location>
        <position position="21"/>
    </location>
</feature>
<feature type="modified residue" description="N6-(beta-hydroxybutyryl)lysine; alternate" evidence="9">
    <location>
        <position position="21"/>
    </location>
</feature>
<feature type="modified residue" description="N6-acetyllysine; alternate" evidence="13">
    <location>
        <position position="21"/>
    </location>
</feature>
<feature type="modified residue" description="N6-butyryllysine; alternate" evidence="3">
    <location>
        <position position="21"/>
    </location>
</feature>
<feature type="modified residue" description="N6-crotonyllysine; alternate" evidence="3">
    <location>
        <position position="21"/>
    </location>
</feature>
<feature type="modified residue" description="N6-lactoyllysine; alternate" evidence="3">
    <location>
        <position position="21"/>
    </location>
</feature>
<feature type="modified residue" description="N6-(2-hydroxyisobutyryl)lysine; alternate" evidence="3">
    <location>
        <position position="24"/>
    </location>
</feature>
<feature type="modified residue" description="N6-acetyllysine; alternate" evidence="3">
    <location>
        <position position="24"/>
    </location>
</feature>
<feature type="modified residue" description="N6-crotonyllysine; alternate" evidence="3">
    <location>
        <position position="24"/>
    </location>
</feature>
<feature type="modified residue" description="N6-lactoyllysine; alternate" evidence="3">
    <location>
        <position position="24"/>
    </location>
</feature>
<feature type="modified residue" description="N6-(2-hydroxyisobutyryl)lysine" evidence="3">
    <location>
        <position position="25"/>
    </location>
</feature>
<feature type="modified residue" description="N6-(2-hydroxyisobutyryl)lysine; alternate" evidence="3">
    <location>
        <position position="35"/>
    </location>
</feature>
<feature type="modified residue" description="N6-(beta-hydroxybutyryl)lysine; alternate" evidence="9">
    <location>
        <position position="35"/>
    </location>
</feature>
<feature type="modified residue" description="N6-crotonyllysine; alternate" evidence="3">
    <location>
        <position position="35"/>
    </location>
</feature>
<feature type="modified residue" description="N6-glutaryllysine; alternate" evidence="3">
    <location>
        <position position="35"/>
    </location>
</feature>
<feature type="modified residue" description="N6-succinyllysine; alternate" evidence="3">
    <location>
        <position position="35"/>
    </location>
</feature>
<feature type="modified residue" description="PolyADP-ribosyl glutamic acid" evidence="9">
    <location>
        <position position="36"/>
    </location>
</feature>
<feature type="modified residue" description="Phosphoserine; by AMPK" evidence="9">
    <location>
        <position position="37"/>
    </location>
</feature>
<feature type="modified residue" description="N6-(2-hydroxyisobutyryl)lysine; alternate" evidence="3">
    <location>
        <position position="44"/>
    </location>
</feature>
<feature type="modified residue" description="N6-glutaryllysine; alternate" evidence="3">
    <location>
        <position position="44"/>
    </location>
</feature>
<feature type="modified residue" description="N6-lactoyllysine; alternate" evidence="3">
    <location>
        <position position="44"/>
    </location>
</feature>
<feature type="modified residue" description="N6-(2-hydroxyisobutyryl)lysine; alternate" evidence="3">
    <location>
        <position position="47"/>
    </location>
</feature>
<feature type="modified residue" description="N6-glutaryllysine; alternate" evidence="3">
    <location>
        <position position="47"/>
    </location>
</feature>
<feature type="modified residue" description="N6-methyllysine; alternate" evidence="5">
    <location>
        <position position="47"/>
    </location>
</feature>
<feature type="modified residue" description="N6,N6-dimethyllysine; alternate" evidence="5">
    <location>
        <position position="58"/>
    </location>
</feature>
<feature type="modified residue" description="N6-(2-hydroxyisobutyryl)lysine; alternate" evidence="3">
    <location>
        <position position="58"/>
    </location>
</feature>
<feature type="modified residue" description="Dimethylated arginine" evidence="11">
    <location>
        <position position="79"/>
    </location>
</feature>
<feature type="modified residue" description="N6,N6,N6-trimethyllysine; alternate" evidence="11">
    <location>
        <position position="85"/>
    </location>
</feature>
<feature type="modified residue" description="N6-(2-hydroxyisobutyryl)lysine; alternate" evidence="3">
    <location>
        <position position="85"/>
    </location>
</feature>
<feature type="modified residue" description="N6-acetyllysine; alternate" evidence="11">
    <location>
        <position position="85"/>
    </location>
</feature>
<feature type="modified residue" description="N6-lactoyllysine; alternate" evidence="3">
    <location>
        <position position="85"/>
    </location>
</feature>
<feature type="modified residue" description="Omega-N-methylarginine" evidence="11">
    <location>
        <position position="86"/>
    </location>
</feature>
<feature type="modified residue" description="Omega-N-methylarginine" evidence="11">
    <location>
        <position position="92"/>
    </location>
</feature>
<feature type="modified residue" description="N6-(2-hydroxyisobutyryl)lysine; alternate" evidence="3">
    <location>
        <position position="108"/>
    </location>
</feature>
<feature type="modified residue" description="N6-glutaryllysine; alternate" evidence="3">
    <location>
        <position position="108"/>
    </location>
</feature>
<feature type="modified residue" description="N6-lactoyllysine; alternate" evidence="3">
    <location>
        <position position="108"/>
    </location>
</feature>
<feature type="modified residue" description="N6-methyllysine; alternate" evidence="5">
    <location>
        <position position="108"/>
    </location>
</feature>
<feature type="modified residue" description="Phosphothreonine" evidence="7">
    <location>
        <position position="115"/>
    </location>
</feature>
<feature type="modified residue" description="N6-(2-hydroxyisobutyryl)lysine; alternate" evidence="3">
    <location>
        <position position="116"/>
    </location>
</feature>
<feature type="modified residue" description="N6-(beta-hydroxybutyryl)lysine; alternate" evidence="9">
    <location>
        <position position="116"/>
    </location>
</feature>
<feature type="modified residue" description="N6-glutaryllysine; alternate" evidence="3">
    <location>
        <position position="116"/>
    </location>
</feature>
<feature type="modified residue" description="N6-lactoyllysine; alternate" evidence="3">
    <location>
        <position position="116"/>
    </location>
</feature>
<feature type="modified residue" description="N6-methylated lysine; alternate" evidence="7">
    <location>
        <position position="116"/>
    </location>
</feature>
<feature type="modified residue" description="N6-succinyllysine; alternate" evidence="3">
    <location>
        <position position="116"/>
    </location>
</feature>
<feature type="modified residue" description="N6-(2-hydroxyisobutyryl)lysine; alternate" evidence="3">
    <location>
        <position position="120"/>
    </location>
</feature>
<feature type="modified residue" description="N6-glutaryllysine; alternate" evidence="3">
    <location>
        <position position="120"/>
    </location>
</feature>
<feature type="modified residue" description="N6-lactoyllysine; alternate" evidence="3">
    <location>
        <position position="120"/>
    </location>
</feature>
<feature type="modified residue" description="N6-succinyllysine; alternate" evidence="3">
    <location>
        <position position="120"/>
    </location>
</feature>
<feature type="glycosylation site" description="O-linked (GlcNAc) serine" evidence="5">
    <location>
        <position position="112"/>
    </location>
</feature>
<feature type="cross-link" description="Glycyl lysine isopeptide (Lys-Gly) (interchain with G-Cter in SUMO2); alternate" evidence="4">
    <location>
        <position position="6"/>
    </location>
</feature>
<feature type="cross-link" description="Glycyl lysine isopeptide (Lys-Gly) (interchain with G-Cter in SUMO2); alternate" evidence="8">
    <location>
        <position position="21"/>
    </location>
</feature>
<feature type="cross-link" description="Glycyl lysine isopeptide (Lys-Gly) (interchain with G-Cter in ubiquitin); alternate" evidence="3">
    <location>
        <position position="35"/>
    </location>
</feature>
<feature type="cross-link" description="Glycyl lysine isopeptide (Lys-Gly) (interchain with G-Cter in ubiquitin); alternate" evidence="6">
    <location>
        <position position="120"/>
    </location>
</feature>
<comment type="function">
    <text>Core component of nucleosome. Nucleosomes wrap and compact DNA into chromatin, limiting DNA accessibility to the cellular machineries which require DNA as a template. Histones thereby play a central role in transcription regulation, DNA repair, DNA replication and chromosomal stability. DNA accessibility is regulated via a complex set of post-translational modifications of histones, also called histone code, and nucleosome remodeling.</text>
</comment>
<comment type="function">
    <text evidence="1">Has broad antibacterial activity. May contribute to the formation of the functional antimicrobial barrier of the colonic epithelium, and to the bactericidal activity of amniotic fluid (By similarity).</text>
</comment>
<comment type="subunit">
    <text>The nucleosome is a histone octamer containing two molecules each of H2A, H2B, H3 and H4 assembled in one H3-H4 heterotetramer and two H2A-H2B heterodimers. The octamer wraps approximately 147 bp of DNA.</text>
</comment>
<comment type="subcellular location">
    <subcellularLocation>
        <location>Nucleus</location>
    </subcellularLocation>
    <subcellularLocation>
        <location>Chromosome</location>
    </subcellularLocation>
</comment>
<comment type="PTM">
    <text evidence="3">Monoubiquitination at Lys-35 (H2BK34Ub) by the MSL1/MSL2 dimer is required for histone H3 'Lys-4' (H3K4me) and 'Lys-79' (H3K79me) methylation and transcription activation at specific gene loci, such as HOXA9 and MEIS1 loci. Similarly, monoubiquitination at Lys-120 (H2BK120Ub) by the RNF20/40 complex gives a specific tag for epigenetic transcriptional activation and is also prerequisite for histone H3 'Lys-4' and 'Lys-79' methylation. It also functions cooperatively with the FACT dimer to stimulate elongation by RNA polymerase II. H2BK120Ub also acts as a regulator of mRNA splicing: deubiquitination by USP49 is required for efficient cotranscriptional splicing of a large set of exons (By similarity).</text>
</comment>
<comment type="PTM">
    <text evidence="3 9">Phosphorylated on Ser-15 (H2BS14ph) by STK4/MST1 during apoptosis; which facilitates apoptotic chromatin condensation. Also phosphorylated on Ser-15 in response to DNA double strand breaks (DSBs), and in correlation with somatic hypermutation and immunoglobulin class-switch recombination. Phosphorylation at Ser-37 (H2BS36ph) by AMPK in response to stress promotes transcription (By similarity).</text>
</comment>
<comment type="PTM">
    <text evidence="3 10">ADP-ribosylated by PARP1 or PARP2 on Ser-7 (H2BS6ADPr) in response to DNA damage (By similarity). H2BS6ADPr promotes recruitment of CHD1L (By similarity). Mono-ADP-ribosylated on Glu-3 (H2BE2ADPr) by PARP3 in response to single-strand breaks (By similarity). Poly ADP-ribosylation on Glu-36 (H2BE35ADPr) by PARP1 regulates adipogenesis: it inhibits phosphorylation at Ser-37 (H2BS36ph), thereby blocking expression of pro-adipogenetic genes (By similarity).</text>
</comment>
<comment type="PTM">
    <text evidence="3">Crotonylation (Kcr) is specifically present in male germ cells and marks testis-specific genes in post-meiotic cells, including X-linked genes that escape sex chromosome inactivation in haploid cells. Crotonylation marks active promoters and enhancers and confers resistance to transcriptional repressors. It is also associated with post-meiotically activated genes on autosomes (By similarity).</text>
</comment>
<comment type="PTM">
    <text evidence="5">GlcNAcylation at Ser-112 promotes monoubiquitination of Lys-120. It fluctuates in response to extracellular glucose, and associates with transcribed genes (By similarity).</text>
</comment>
<comment type="PTM">
    <text evidence="3">Lactylated in macrophages by EP300/P300 by using lactoyl-CoA directly derived from endogenous or exogenous lactate, leading to stimulates gene transcription.</text>
</comment>
<comment type="similarity">
    <text evidence="14">Belongs to the histone H2B family.</text>
</comment>
<proteinExistence type="evidence at protein level"/>
<dbReference type="EMBL" id="X59961">
    <property type="protein sequence ID" value="CAA42585.1"/>
    <property type="molecule type" value="Genomic_DNA"/>
</dbReference>
<dbReference type="PIR" id="B45945">
    <property type="entry name" value="B45945"/>
</dbReference>
<dbReference type="PIR" id="S26185">
    <property type="entry name" value="S26185"/>
</dbReference>
<dbReference type="RefSeq" id="NP_072173.1">
    <property type="nucleotide sequence ID" value="NM_022647.1"/>
</dbReference>
<dbReference type="SMR" id="Q00715"/>
<dbReference type="BioGRID" id="249180">
    <property type="interactions" value="7"/>
</dbReference>
<dbReference type="FunCoup" id="Q00715">
    <property type="interactions" value="450"/>
</dbReference>
<dbReference type="IntAct" id="Q00715">
    <property type="interactions" value="3"/>
</dbReference>
<dbReference type="MINT" id="Q00715"/>
<dbReference type="STRING" id="10116.ENSRNOP00000028779"/>
<dbReference type="CarbonylDB" id="Q00715"/>
<dbReference type="GlyGen" id="Q00715">
    <property type="glycosylation" value="2 sites, 1 O-linked glycan (1 site)"/>
</dbReference>
<dbReference type="iPTMnet" id="Q00715"/>
<dbReference type="PhosphoSitePlus" id="Q00715"/>
<dbReference type="jPOST" id="Q00715"/>
<dbReference type="PaxDb" id="10116-ENSRNOP00000028779"/>
<dbReference type="GeneID" id="64647"/>
<dbReference type="KEGG" id="rno:64647"/>
<dbReference type="UCSC" id="RGD:621439">
    <property type="organism name" value="rat"/>
</dbReference>
<dbReference type="AGR" id="RGD:621439"/>
<dbReference type="CTD" id="64647"/>
<dbReference type="eggNOG" id="KOG1744">
    <property type="taxonomic scope" value="Eukaryota"/>
</dbReference>
<dbReference type="InParanoid" id="Q00715"/>
<dbReference type="PhylomeDB" id="Q00715"/>
<dbReference type="PRO" id="PR:Q00715"/>
<dbReference type="Proteomes" id="UP000002494">
    <property type="component" value="Unplaced"/>
</dbReference>
<dbReference type="GO" id="GO:0005654">
    <property type="term" value="C:nucleoplasm"/>
    <property type="evidence" value="ECO:0000304"/>
    <property type="project" value="Reactome"/>
</dbReference>
<dbReference type="GO" id="GO:0000786">
    <property type="term" value="C:nucleosome"/>
    <property type="evidence" value="ECO:0007669"/>
    <property type="project" value="UniProtKB-KW"/>
</dbReference>
<dbReference type="GO" id="GO:0003677">
    <property type="term" value="F:DNA binding"/>
    <property type="evidence" value="ECO:0007669"/>
    <property type="project" value="UniProtKB-KW"/>
</dbReference>
<dbReference type="GO" id="GO:0046982">
    <property type="term" value="F:protein heterodimerization activity"/>
    <property type="evidence" value="ECO:0007669"/>
    <property type="project" value="InterPro"/>
</dbReference>
<dbReference type="GO" id="GO:0030527">
    <property type="term" value="F:structural constituent of chromatin"/>
    <property type="evidence" value="ECO:0007669"/>
    <property type="project" value="InterPro"/>
</dbReference>
<dbReference type="GO" id="GO:0042742">
    <property type="term" value="P:defense response to bacterium"/>
    <property type="evidence" value="ECO:0007669"/>
    <property type="project" value="UniProtKB-KW"/>
</dbReference>
<dbReference type="CDD" id="cd22910">
    <property type="entry name" value="HFD_H2B"/>
    <property type="match status" value="1"/>
</dbReference>
<dbReference type="FunFam" id="1.10.20.10:FF:000003">
    <property type="entry name" value="Histone H2B"/>
    <property type="match status" value="1"/>
</dbReference>
<dbReference type="Gene3D" id="1.10.20.10">
    <property type="entry name" value="Histone, subunit A"/>
    <property type="match status" value="1"/>
</dbReference>
<dbReference type="InterPro" id="IPR009072">
    <property type="entry name" value="Histone-fold"/>
</dbReference>
<dbReference type="InterPro" id="IPR007125">
    <property type="entry name" value="Histone_H2A/H2B/H3"/>
</dbReference>
<dbReference type="InterPro" id="IPR000558">
    <property type="entry name" value="Histone_H2B"/>
</dbReference>
<dbReference type="InterPro" id="IPR055333">
    <property type="entry name" value="HISTONE_H2B_site"/>
</dbReference>
<dbReference type="PANTHER" id="PTHR23428">
    <property type="entry name" value="HISTONE H2B"/>
    <property type="match status" value="1"/>
</dbReference>
<dbReference type="Pfam" id="PF00125">
    <property type="entry name" value="Histone"/>
    <property type="match status" value="1"/>
</dbReference>
<dbReference type="PRINTS" id="PR00621">
    <property type="entry name" value="HISTONEH2B"/>
</dbReference>
<dbReference type="SMART" id="SM00427">
    <property type="entry name" value="H2B"/>
    <property type="match status" value="1"/>
</dbReference>
<dbReference type="SUPFAM" id="SSF47113">
    <property type="entry name" value="Histone-fold"/>
    <property type="match status" value="1"/>
</dbReference>
<dbReference type="PROSITE" id="PS00357">
    <property type="entry name" value="HISTONE_H2B"/>
    <property type="match status" value="1"/>
</dbReference>
<accession>Q00715</accession>
<protein>
    <recommendedName>
        <fullName>Histone H2B type 1</fullName>
    </recommendedName>
</protein>
<evidence type="ECO:0000250" key="1"/>
<evidence type="ECO:0000250" key="2">
    <source>
        <dbReference type="UniProtKB" id="P23527"/>
    </source>
</evidence>
<evidence type="ECO:0000250" key="3">
    <source>
        <dbReference type="UniProtKB" id="P33778"/>
    </source>
</evidence>
<evidence type="ECO:0000250" key="4">
    <source>
        <dbReference type="UniProtKB" id="P58876"/>
    </source>
</evidence>
<evidence type="ECO:0000250" key="5">
    <source>
        <dbReference type="UniProtKB" id="P62807"/>
    </source>
</evidence>
<evidence type="ECO:0000250" key="6">
    <source>
        <dbReference type="UniProtKB" id="P62808"/>
    </source>
</evidence>
<evidence type="ECO:0000250" key="7">
    <source>
        <dbReference type="UniProtKB" id="Q00729"/>
    </source>
</evidence>
<evidence type="ECO:0000250" key="8">
    <source>
        <dbReference type="UniProtKB" id="Q5QNW6"/>
    </source>
</evidence>
<evidence type="ECO:0000250" key="9">
    <source>
        <dbReference type="UniProtKB" id="Q64475"/>
    </source>
</evidence>
<evidence type="ECO:0000250" key="10">
    <source>
        <dbReference type="UniProtKB" id="Q6ZWY9"/>
    </source>
</evidence>
<evidence type="ECO:0000250" key="11">
    <source>
        <dbReference type="UniProtKB" id="Q96A08"/>
    </source>
</evidence>
<evidence type="ECO:0000256" key="12">
    <source>
        <dbReference type="SAM" id="MobiDB-lite"/>
    </source>
</evidence>
<evidence type="ECO:0000269" key="13">
    <source>
    </source>
</evidence>
<evidence type="ECO:0000305" key="14"/>
<reference key="1">
    <citation type="journal article" date="1991" name="Nucleic Acids Res.">
        <title>Presence of a bi-directional S phase-specific transcription regulatory element in the promoter shared by testis-specific TH2A and TH2B histone genes.</title>
        <authorList>
            <person name="Huh N.E."/>
            <person name="Hwang I."/>
            <person name="Lim K."/>
            <person name="You K.H."/>
            <person name="Chae C.-B."/>
        </authorList>
    </citation>
    <scope>NUCLEOTIDE SEQUENCE [GENOMIC DNA]</scope>
    <source>
        <strain>Sprague-Dawley</strain>
    </source>
</reference>
<reference key="2">
    <citation type="journal article" date="1987" name="Dev. Biol.">
        <title>Molecular cloning and differential expression of somatic and testis-specific H2B histone genes during rat spermatogenesis.</title>
        <authorList>
            <person name="Kim Y.-J."/>
            <person name="Hwang I."/>
            <person name="Tres L.L."/>
            <person name="Kierszenbaum A.L."/>
            <person name="Chae C.-B."/>
        </authorList>
    </citation>
    <scope>NUCLEOTIDE SEQUENCE [GENOMIC DNA]</scope>
</reference>
<reference key="3">
    <citation type="submission" date="2007-09" db="UniProtKB">
        <authorList>
            <person name="Lubec G."/>
            <person name="Kang S.U."/>
            <person name="Lubec S."/>
        </authorList>
    </citation>
    <scope>PROTEIN SEQUENCE OF 36-44; 48-73 AND 100-108</scope>
    <scope>IDENTIFICATION BY MASS SPECTROMETRY</scope>
    <source>
        <strain>Sprague-Dawley</strain>
        <tissue>Brain</tissue>
    </source>
</reference>
<reference key="4">
    <citation type="journal article" date="2005" name="Mol. Cell. Biochem.">
        <title>Inhibition of core histones acetylation by carcinogenic nickel(II).</title>
        <authorList>
            <person name="Golebiowski F."/>
            <person name="Kasprzak K.S."/>
        </authorList>
    </citation>
    <scope>ACETYLATION AT LYS-6; LYS-13; LYS-16 AND LYS-21</scope>
</reference>